<reference key="1">
    <citation type="journal article" date="2000" name="Nature">
        <title>The genome sequence of the thermoacidophilic scavenger Thermoplasma acidophilum.</title>
        <authorList>
            <person name="Ruepp A."/>
            <person name="Graml W."/>
            <person name="Santos-Martinez M.-L."/>
            <person name="Koretke K.K."/>
            <person name="Volker C."/>
            <person name="Mewes H.-W."/>
            <person name="Frishman D."/>
            <person name="Stocker S."/>
            <person name="Lupas A.N."/>
            <person name="Baumeister W."/>
        </authorList>
    </citation>
    <scope>NUCLEOTIDE SEQUENCE [LARGE SCALE GENOMIC DNA]</scope>
    <source>
        <strain>ATCC 25905 / DSM 1728 / JCM 9062 / NBRC 15155 / AMRC-C165</strain>
    </source>
</reference>
<reference key="2">
    <citation type="journal article" date="2014" name="Biochemistry">
        <title>Evidence of a novel mevalonate pathway in archaea.</title>
        <authorList>
            <person name="Vinokur J.M."/>
            <person name="Korman T.P."/>
            <person name="Cao Z."/>
            <person name="Bowie J.U."/>
        </authorList>
    </citation>
    <scope>FUNCTION</scope>
    <scope>CATALYTIC ACTIVITY</scope>
    <scope>BIOPHYSICOCHEMICAL PROPERTIES</scope>
    <scope>PATHWAY</scope>
    <source>
        <strain>ATCC 25905 / DSM 1728 / JCM 9062 / NBRC 15155 / AMRC-C165</strain>
    </source>
</reference>
<reference key="3">
    <citation type="journal article" date="2016" name="Sci. Rep.">
        <title>An adaptation to life in acid through a novel mevalonate pathway.</title>
        <authorList>
            <person name="Vinokur J.M."/>
            <person name="Cummins M.C."/>
            <person name="Korman T.P."/>
            <person name="Bowie J.U."/>
        </authorList>
    </citation>
    <scope>PATHWAY</scope>
</reference>
<feature type="chain" id="PRO_0000431279" description="Mevalonate-3-phosphate 5-kinase">
    <location>
        <begin position="1"/>
        <end position="202"/>
    </location>
</feature>
<evidence type="ECO:0000269" key="1">
    <source>
    </source>
</evidence>
<evidence type="ECO:0000303" key="2">
    <source>
    </source>
</evidence>
<evidence type="ECO:0000305" key="3">
    <source>
    </source>
</evidence>
<evidence type="ECO:0000312" key="4">
    <source>
        <dbReference type="EMBL" id="CAC11895.1"/>
    </source>
</evidence>
<proteinExistence type="evidence at protein level"/>
<accession>Q9HK44</accession>
<comment type="function">
    <text evidence="1">Phosphorylates mevalonate 3-phosphate to form mevalonate 3,5-bisphosphate. Functions in an alternative mevalonate pathway, only present in extreme acidophiles of the Thermoplasmatales order, which passes through mevalonate 3-phosphate rather than mevalonate 5-phosphate.</text>
</comment>
<comment type="catalytic activity">
    <reaction evidence="1">
        <text>(R)-3-phosphomevalonate + ATP = (R)-3,5-bisphosphomevalonate + ADP + H(+)</text>
        <dbReference type="Rhea" id="RHEA:42888"/>
        <dbReference type="ChEBI" id="CHEBI:15378"/>
        <dbReference type="ChEBI" id="CHEBI:30616"/>
        <dbReference type="ChEBI" id="CHEBI:82773"/>
        <dbReference type="ChEBI" id="CHEBI:82774"/>
        <dbReference type="ChEBI" id="CHEBI:456216"/>
        <dbReference type="EC" id="2.7.1.186"/>
    </reaction>
</comment>
<comment type="biophysicochemical properties">
    <kinetics>
        <text evidence="1">kcat is 9.0 sec(-1).</text>
    </kinetics>
    <phDependence>
        <text evidence="1">Does not demonstrate significant pH dependence in the pH range of 6.5-9.0.</text>
    </phDependence>
    <temperatureDependence>
        <text evidence="1">Optimum temperature is 60 degrees Celsius.</text>
    </temperatureDependence>
</comment>
<comment type="pathway">
    <text evidence="1 3">Isoprenoid biosynthesis; isopentenyl diphosphate biosynthesis via mevalonate pathway.</text>
</comment>
<comment type="miscellaneous">
    <text evidence="3">It is proposed that Thermoplasmatales adapted the classical archaeal mevalonate pathway by replacing mevalonate 5-phosphate decarboxylase (MMD) with two specialized enzymes (mevalonate-3-phosphate 5-kinase and mevalonate 3,5-bisphosphate decarboxylase) in order to produce isoprenoids in extremely acidic environments. It was found that at low pH, the dual function enzyme MMD is unable to carry out the first phosphorylation step, yet retains its ability to perform decarboxylation.</text>
</comment>
<sequence length="202" mass="23298">MNSRIMFIGGVPGVGKTSISGYIARNTDIDIVLSSDYLREFLRPFAPQESHLETSVYDAWKFYGDMSDDNIIRGYLDQARPIMGGINRVIARALANGEDLIIESLYFVPDMMDEMVLKNAFLAYVYIDDPDLHRSRLEDRINYTHRNSPGSRLAAHLKEYRTIMDYSMDMARGRGIGLYSTDDYALARQRLLDDFRKFVDRR</sequence>
<protein>
    <recommendedName>
        <fullName evidence="2">Mevalonate-3-phosphate 5-kinase</fullName>
        <ecNumber evidence="1">2.7.1.186</ecNumber>
    </recommendedName>
</protein>
<gene>
    <name evidence="4" type="ordered locus">Ta0762</name>
</gene>
<keyword id="KW-0067">ATP-binding</keyword>
<keyword id="KW-0414">Isoprene biosynthesis</keyword>
<keyword id="KW-0418">Kinase</keyword>
<keyword id="KW-0444">Lipid biosynthesis</keyword>
<keyword id="KW-0443">Lipid metabolism</keyword>
<keyword id="KW-0547">Nucleotide-binding</keyword>
<keyword id="KW-1185">Reference proteome</keyword>
<keyword id="KW-0808">Transferase</keyword>
<dbReference type="EC" id="2.7.1.186" evidence="1"/>
<dbReference type="EMBL" id="AL445065">
    <property type="protein sequence ID" value="CAC11895.1"/>
    <property type="molecule type" value="Genomic_DNA"/>
</dbReference>
<dbReference type="RefSeq" id="WP_010901177.1">
    <property type="nucleotide sequence ID" value="NC_002578.1"/>
</dbReference>
<dbReference type="STRING" id="273075.gene:9571977"/>
<dbReference type="PaxDb" id="273075-Ta0762"/>
<dbReference type="EnsemblBacteria" id="CAC11895">
    <property type="protein sequence ID" value="CAC11895"/>
    <property type="gene ID" value="CAC11895"/>
</dbReference>
<dbReference type="KEGG" id="tac:Ta0762"/>
<dbReference type="eggNOG" id="arCOG01967">
    <property type="taxonomic scope" value="Archaea"/>
</dbReference>
<dbReference type="HOGENOM" id="CLU_1412410_0_0_2"/>
<dbReference type="InParanoid" id="Q9HK44"/>
<dbReference type="OrthoDB" id="31230at2157"/>
<dbReference type="BioCyc" id="MetaCyc:MONOMER-18736"/>
<dbReference type="BRENDA" id="2.7.1.186">
    <property type="organism ID" value="6324"/>
</dbReference>
<dbReference type="UniPathway" id="UPA00057"/>
<dbReference type="Proteomes" id="UP000001024">
    <property type="component" value="Chromosome"/>
</dbReference>
<dbReference type="GO" id="GO:0005524">
    <property type="term" value="F:ATP binding"/>
    <property type="evidence" value="ECO:0007669"/>
    <property type="project" value="UniProtKB-KW"/>
</dbReference>
<dbReference type="GO" id="GO:0016301">
    <property type="term" value="F:kinase activity"/>
    <property type="evidence" value="ECO:0007669"/>
    <property type="project" value="UniProtKB-KW"/>
</dbReference>
<dbReference type="GO" id="GO:0016773">
    <property type="term" value="F:phosphotransferase activity, alcohol group as acceptor"/>
    <property type="evidence" value="ECO:0000314"/>
    <property type="project" value="UniProtKB"/>
</dbReference>
<dbReference type="GO" id="GO:0019287">
    <property type="term" value="P:isopentenyl diphosphate biosynthetic process, mevalonate pathway"/>
    <property type="evidence" value="ECO:0000314"/>
    <property type="project" value="UniProtKB"/>
</dbReference>
<dbReference type="Gene3D" id="3.40.50.300">
    <property type="entry name" value="P-loop containing nucleotide triphosphate hydrolases"/>
    <property type="match status" value="1"/>
</dbReference>
<dbReference type="InterPro" id="IPR027417">
    <property type="entry name" value="P-loop_NTPase"/>
</dbReference>
<dbReference type="NCBIfam" id="NF008996">
    <property type="entry name" value="PRK12339.1"/>
    <property type="match status" value="1"/>
</dbReference>
<dbReference type="PANTHER" id="PTHR33477">
    <property type="entry name" value="P-LOOP NTPASE DOMAIN-CONTAINING PROTEIN LPA1 HOMOLOG 1"/>
    <property type="match status" value="1"/>
</dbReference>
<dbReference type="PANTHER" id="PTHR33477:SF3">
    <property type="entry name" value="P-LOOP NTPASE DOMAIN-CONTAINING PROTEIN LPA1 HOMOLOG 1"/>
    <property type="match status" value="1"/>
</dbReference>
<dbReference type="SUPFAM" id="SSF52540">
    <property type="entry name" value="P-loop containing nucleoside triphosphate hydrolases"/>
    <property type="match status" value="1"/>
</dbReference>
<name>MVP5K_THEAC</name>
<organism>
    <name type="scientific">Thermoplasma acidophilum (strain ATCC 25905 / DSM 1728 / JCM 9062 / NBRC 15155 / AMRC-C165)</name>
    <dbReference type="NCBI Taxonomy" id="273075"/>
    <lineage>
        <taxon>Archaea</taxon>
        <taxon>Methanobacteriati</taxon>
        <taxon>Thermoplasmatota</taxon>
        <taxon>Thermoplasmata</taxon>
        <taxon>Thermoplasmatales</taxon>
        <taxon>Thermoplasmataceae</taxon>
        <taxon>Thermoplasma</taxon>
    </lineage>
</organism>